<proteinExistence type="inferred from homology"/>
<keyword id="KW-0687">Ribonucleoprotein</keyword>
<keyword id="KW-0689">Ribosomal protein</keyword>
<keyword id="KW-0694">RNA-binding</keyword>
<keyword id="KW-0699">rRNA-binding</keyword>
<reference key="1">
    <citation type="submission" date="2007-05" db="EMBL/GenBank/DDBJ databases">
        <title>Complete sequence of Pseudomonas putida F1.</title>
        <authorList>
            <consortium name="US DOE Joint Genome Institute"/>
            <person name="Copeland A."/>
            <person name="Lucas S."/>
            <person name="Lapidus A."/>
            <person name="Barry K."/>
            <person name="Detter J.C."/>
            <person name="Glavina del Rio T."/>
            <person name="Hammon N."/>
            <person name="Israni S."/>
            <person name="Dalin E."/>
            <person name="Tice H."/>
            <person name="Pitluck S."/>
            <person name="Chain P."/>
            <person name="Malfatti S."/>
            <person name="Shin M."/>
            <person name="Vergez L."/>
            <person name="Schmutz J."/>
            <person name="Larimer F."/>
            <person name="Land M."/>
            <person name="Hauser L."/>
            <person name="Kyrpides N."/>
            <person name="Lykidis A."/>
            <person name="Parales R."/>
            <person name="Richardson P."/>
        </authorList>
    </citation>
    <scope>NUCLEOTIDE SEQUENCE [LARGE SCALE GENOMIC DNA]</scope>
    <source>
        <strain>ATCC 700007 / DSM 6899 / JCM 31910 / BCRC 17059 / LMG 24140 / F1</strain>
    </source>
</reference>
<comment type="function">
    <text evidence="1">This is one of the proteins that binds to the 5S RNA in the ribosome where it forms part of the central protuberance.</text>
</comment>
<comment type="subunit">
    <text evidence="1">Part of the 50S ribosomal subunit; part of the 5S rRNA/L5/L18/L25 subcomplex. Contacts the 5S rRNA. Binds to the 5S rRNA independently of L5 and L18.</text>
</comment>
<comment type="similarity">
    <text evidence="1">Belongs to the bacterial ribosomal protein bL25 family. CTC subfamily.</text>
</comment>
<evidence type="ECO:0000255" key="1">
    <source>
        <dbReference type="HAMAP-Rule" id="MF_01334"/>
    </source>
</evidence>
<evidence type="ECO:0000305" key="2"/>
<name>RL25_PSEP1</name>
<dbReference type="EMBL" id="CP000712">
    <property type="protein sequence ID" value="ABQ76919.1"/>
    <property type="molecule type" value="Genomic_DNA"/>
</dbReference>
<dbReference type="SMR" id="A5VYF9"/>
<dbReference type="KEGG" id="ppf:Pput_0755"/>
<dbReference type="eggNOG" id="COG1825">
    <property type="taxonomic scope" value="Bacteria"/>
</dbReference>
<dbReference type="HOGENOM" id="CLU_075939_0_1_6"/>
<dbReference type="GO" id="GO:0022625">
    <property type="term" value="C:cytosolic large ribosomal subunit"/>
    <property type="evidence" value="ECO:0007669"/>
    <property type="project" value="TreeGrafter"/>
</dbReference>
<dbReference type="GO" id="GO:0008097">
    <property type="term" value="F:5S rRNA binding"/>
    <property type="evidence" value="ECO:0007669"/>
    <property type="project" value="InterPro"/>
</dbReference>
<dbReference type="GO" id="GO:0003735">
    <property type="term" value="F:structural constituent of ribosome"/>
    <property type="evidence" value="ECO:0007669"/>
    <property type="project" value="InterPro"/>
</dbReference>
<dbReference type="GO" id="GO:0006412">
    <property type="term" value="P:translation"/>
    <property type="evidence" value="ECO:0007669"/>
    <property type="project" value="UniProtKB-UniRule"/>
</dbReference>
<dbReference type="CDD" id="cd00495">
    <property type="entry name" value="Ribosomal_L25_TL5_CTC"/>
    <property type="match status" value="1"/>
</dbReference>
<dbReference type="Gene3D" id="2.170.120.20">
    <property type="entry name" value="Ribosomal protein L25, beta domain"/>
    <property type="match status" value="1"/>
</dbReference>
<dbReference type="Gene3D" id="2.40.240.10">
    <property type="entry name" value="Ribosomal Protein L25, Chain P"/>
    <property type="match status" value="1"/>
</dbReference>
<dbReference type="HAMAP" id="MF_01336">
    <property type="entry name" value="Ribosomal_bL25"/>
    <property type="match status" value="1"/>
</dbReference>
<dbReference type="HAMAP" id="MF_01334">
    <property type="entry name" value="Ribosomal_bL25_CTC"/>
    <property type="match status" value="1"/>
</dbReference>
<dbReference type="InterPro" id="IPR020056">
    <property type="entry name" value="Rbsml_bL25/Gln-tRNA_synth_N"/>
</dbReference>
<dbReference type="InterPro" id="IPR011035">
    <property type="entry name" value="Ribosomal_bL25/Gln-tRNA_synth"/>
</dbReference>
<dbReference type="InterPro" id="IPR020057">
    <property type="entry name" value="Ribosomal_bL25_b-dom"/>
</dbReference>
<dbReference type="InterPro" id="IPR037121">
    <property type="entry name" value="Ribosomal_bL25_C"/>
</dbReference>
<dbReference type="InterPro" id="IPR001021">
    <property type="entry name" value="Ribosomal_bL25_long"/>
</dbReference>
<dbReference type="InterPro" id="IPR020055">
    <property type="entry name" value="Ribosomal_bL25_short"/>
</dbReference>
<dbReference type="InterPro" id="IPR029751">
    <property type="entry name" value="Ribosomal_L25_dom"/>
</dbReference>
<dbReference type="InterPro" id="IPR020930">
    <property type="entry name" value="Ribosomal_uL5_bac-type"/>
</dbReference>
<dbReference type="NCBIfam" id="TIGR00731">
    <property type="entry name" value="bL25_bact_ctc"/>
    <property type="match status" value="1"/>
</dbReference>
<dbReference type="NCBIfam" id="NF004128">
    <property type="entry name" value="PRK05618.1-2"/>
    <property type="match status" value="1"/>
</dbReference>
<dbReference type="NCBIfam" id="NF004130">
    <property type="entry name" value="PRK05618.1-5"/>
    <property type="match status" value="1"/>
</dbReference>
<dbReference type="NCBIfam" id="NF004612">
    <property type="entry name" value="PRK05943.1"/>
    <property type="match status" value="1"/>
</dbReference>
<dbReference type="PANTHER" id="PTHR33284">
    <property type="entry name" value="RIBOSOMAL PROTEIN L25/GLN-TRNA SYNTHETASE, ANTI-CODON-BINDING DOMAIN-CONTAINING PROTEIN"/>
    <property type="match status" value="1"/>
</dbReference>
<dbReference type="PANTHER" id="PTHR33284:SF1">
    <property type="entry name" value="RIBOSOMAL PROTEIN L25_GLN-TRNA SYNTHETASE, ANTI-CODON-BINDING DOMAIN-CONTAINING PROTEIN"/>
    <property type="match status" value="1"/>
</dbReference>
<dbReference type="Pfam" id="PF01386">
    <property type="entry name" value="Ribosomal_L25p"/>
    <property type="match status" value="1"/>
</dbReference>
<dbReference type="Pfam" id="PF14693">
    <property type="entry name" value="Ribosomal_TL5_C"/>
    <property type="match status" value="1"/>
</dbReference>
<dbReference type="SUPFAM" id="SSF50715">
    <property type="entry name" value="Ribosomal protein L25-like"/>
    <property type="match status" value="1"/>
</dbReference>
<gene>
    <name evidence="1" type="primary">rplY</name>
    <name evidence="1" type="synonym">ctc</name>
    <name type="ordered locus">Pput_0755</name>
</gene>
<sequence>MTDFILNAQARTDLGKGASRRLRHSLSIPAVVYGGDKEAQSLTILAKEITKLFENEAAFSHVIELNVDGVKQNVIIKAMQRHPAKQFIMHADFVRVVAGQKLTAKVPVHFINEEAPVKKGGEISHVESEIEVSCEAKDLPEFIEVDLGNAEIGTIIHLSDLKAPKGVEFVALAHGDDKAVANVHAPRVAPEAEGAAE</sequence>
<accession>A5VYF9</accession>
<protein>
    <recommendedName>
        <fullName evidence="1">Large ribosomal subunit protein bL25</fullName>
    </recommendedName>
    <alternativeName>
        <fullName evidence="2">50S ribosomal protein L25</fullName>
    </alternativeName>
    <alternativeName>
        <fullName evidence="1">General stress protein CTC</fullName>
    </alternativeName>
</protein>
<organism>
    <name type="scientific">Pseudomonas putida (strain ATCC 700007 / DSM 6899 / JCM 31910 / BCRC 17059 / LMG 24140 / F1)</name>
    <dbReference type="NCBI Taxonomy" id="351746"/>
    <lineage>
        <taxon>Bacteria</taxon>
        <taxon>Pseudomonadati</taxon>
        <taxon>Pseudomonadota</taxon>
        <taxon>Gammaproteobacteria</taxon>
        <taxon>Pseudomonadales</taxon>
        <taxon>Pseudomonadaceae</taxon>
        <taxon>Pseudomonas</taxon>
    </lineage>
</organism>
<feature type="chain" id="PRO_1000052921" description="Large ribosomal subunit protein bL25">
    <location>
        <begin position="1"/>
        <end position="197"/>
    </location>
</feature>